<proteinExistence type="inferred from homology"/>
<comment type="function">
    <text evidence="1">Exhibits S-adenosyl-L-methionine-dependent methyltransferase activity.</text>
</comment>
<comment type="similarity">
    <text evidence="2">Belongs to the UPF0677 family.</text>
</comment>
<name>Y893_MYCTO</name>
<keyword id="KW-0489">Methyltransferase</keyword>
<keyword id="KW-1185">Reference proteome</keyword>
<keyword id="KW-0949">S-adenosyl-L-methionine</keyword>
<keyword id="KW-0808">Transferase</keyword>
<reference key="1">
    <citation type="journal article" date="2002" name="J. Bacteriol.">
        <title>Whole-genome comparison of Mycobacterium tuberculosis clinical and laboratory strains.</title>
        <authorList>
            <person name="Fleischmann R.D."/>
            <person name="Alland D."/>
            <person name="Eisen J.A."/>
            <person name="Carpenter L."/>
            <person name="White O."/>
            <person name="Peterson J.D."/>
            <person name="DeBoy R.T."/>
            <person name="Dodson R.J."/>
            <person name="Gwinn M.L."/>
            <person name="Haft D.H."/>
            <person name="Hickey E.K."/>
            <person name="Kolonay J.F."/>
            <person name="Nelson W.C."/>
            <person name="Umayam L.A."/>
            <person name="Ermolaeva M.D."/>
            <person name="Salzberg S.L."/>
            <person name="Delcher A."/>
            <person name="Utterback T.R."/>
            <person name="Weidman J.F."/>
            <person name="Khouri H.M."/>
            <person name="Gill J."/>
            <person name="Mikula A."/>
            <person name="Bishai W."/>
            <person name="Jacobs W.R. Jr."/>
            <person name="Venter J.C."/>
            <person name="Fraser C.M."/>
        </authorList>
    </citation>
    <scope>NUCLEOTIDE SEQUENCE [LARGE SCALE GENOMIC DNA]</scope>
    <source>
        <strain>CDC 1551 / Oshkosh</strain>
    </source>
</reference>
<sequence>MRTEDDSWDVTTSVGSTGLLVAAARALETQKADPLAIDPYAEVFCRAAGGEWADVLDGKLPDHYLTTGDFGEHFVNFQGARTRYFDEYFSRATAAGMKQVVILAAGLDSRAFRLQWPIGTTIFELDRPQVLDFKNAVLADYHIRPRAQRRSVAVDLRDEWQIALCNNGFDANRPSAWIAEGLLVYLSAEAQQRLFIGIDTLASPGSHVAVEEATPLDPCEFAAKLERERAANAQGDPRRFFQMVYNERWARATEWFDERGWRATATPLAEYLRRVGRAVPEADTEAAPMVTAITFVSAVRTGLVADPARTSPSSTSIGFKRFEAD</sequence>
<accession>P9WFI0</accession>
<accession>L0T579</accession>
<accession>P64747</accession>
<accession>Q10552</accession>
<feature type="chain" id="PRO_0000428535" description="Putative S-adenosyl-L-methionine-dependent methyltransferase MT0917">
    <location>
        <begin position="1"/>
        <end position="325"/>
    </location>
</feature>
<feature type="binding site" evidence="1">
    <location>
        <position position="126"/>
    </location>
    <ligand>
        <name>S-adenosyl-L-methionine</name>
        <dbReference type="ChEBI" id="CHEBI:59789"/>
    </ligand>
</feature>
<feature type="binding site" evidence="1">
    <location>
        <begin position="155"/>
        <end position="156"/>
    </location>
    <ligand>
        <name>S-adenosyl-L-methionine</name>
        <dbReference type="ChEBI" id="CHEBI:59789"/>
    </ligand>
</feature>
<evidence type="ECO:0000250" key="1"/>
<evidence type="ECO:0000305" key="2"/>
<protein>
    <recommendedName>
        <fullName>Putative S-adenosyl-L-methionine-dependent methyltransferase MT0917</fullName>
        <ecNumber>2.1.1.-</ecNumber>
    </recommendedName>
</protein>
<dbReference type="EC" id="2.1.1.-"/>
<dbReference type="EMBL" id="AE000516">
    <property type="protein sequence ID" value="AAK45163.1"/>
    <property type="molecule type" value="Genomic_DNA"/>
</dbReference>
<dbReference type="PIR" id="B70782">
    <property type="entry name" value="B70782"/>
</dbReference>
<dbReference type="RefSeq" id="WP_003404654.1">
    <property type="nucleotide sequence ID" value="NZ_KK341227.1"/>
</dbReference>
<dbReference type="SMR" id="P9WFI0"/>
<dbReference type="KEGG" id="mtc:MT0917"/>
<dbReference type="PATRIC" id="fig|83331.31.peg.985"/>
<dbReference type="HOGENOM" id="CLU_056160_2_1_11"/>
<dbReference type="Proteomes" id="UP000001020">
    <property type="component" value="Chromosome"/>
</dbReference>
<dbReference type="GO" id="GO:0008168">
    <property type="term" value="F:methyltransferase activity"/>
    <property type="evidence" value="ECO:0007669"/>
    <property type="project" value="UniProtKB-KW"/>
</dbReference>
<dbReference type="GO" id="GO:0032259">
    <property type="term" value="P:methylation"/>
    <property type="evidence" value="ECO:0007669"/>
    <property type="project" value="UniProtKB-KW"/>
</dbReference>
<dbReference type="FunFam" id="3.40.50.150:FF:000152">
    <property type="entry name" value="S-adenosyl-L-methionine-dependent methyltransferase"/>
    <property type="match status" value="1"/>
</dbReference>
<dbReference type="Gene3D" id="3.40.50.150">
    <property type="entry name" value="Vaccinia Virus protein VP39"/>
    <property type="match status" value="1"/>
</dbReference>
<dbReference type="InterPro" id="IPR007213">
    <property type="entry name" value="Ppm1/Ppm2/Tcmp"/>
</dbReference>
<dbReference type="InterPro" id="IPR029063">
    <property type="entry name" value="SAM-dependent_MTases_sf"/>
</dbReference>
<dbReference type="InterPro" id="IPR011610">
    <property type="entry name" value="SAM_mthyl_Trfase_ML2640-like"/>
</dbReference>
<dbReference type="NCBIfam" id="TIGR00027">
    <property type="entry name" value="mthyl_TIGR00027"/>
    <property type="match status" value="1"/>
</dbReference>
<dbReference type="PANTHER" id="PTHR43619">
    <property type="entry name" value="S-ADENOSYL-L-METHIONINE-DEPENDENT METHYLTRANSFERASE YKTD-RELATED"/>
    <property type="match status" value="1"/>
</dbReference>
<dbReference type="PANTHER" id="PTHR43619:SF2">
    <property type="entry name" value="S-ADENOSYL-L-METHIONINE-DEPENDENT METHYLTRANSFERASES SUPERFAMILY PROTEIN"/>
    <property type="match status" value="1"/>
</dbReference>
<dbReference type="Pfam" id="PF04072">
    <property type="entry name" value="LCM"/>
    <property type="match status" value="1"/>
</dbReference>
<dbReference type="SUPFAM" id="SSF53335">
    <property type="entry name" value="S-adenosyl-L-methionine-dependent methyltransferases"/>
    <property type="match status" value="1"/>
</dbReference>
<organism>
    <name type="scientific">Mycobacterium tuberculosis (strain CDC 1551 / Oshkosh)</name>
    <dbReference type="NCBI Taxonomy" id="83331"/>
    <lineage>
        <taxon>Bacteria</taxon>
        <taxon>Bacillati</taxon>
        <taxon>Actinomycetota</taxon>
        <taxon>Actinomycetes</taxon>
        <taxon>Mycobacteriales</taxon>
        <taxon>Mycobacteriaceae</taxon>
        <taxon>Mycobacterium</taxon>
        <taxon>Mycobacterium tuberculosis complex</taxon>
    </lineage>
</organism>
<gene>
    <name type="ordered locus">MT0917</name>
</gene>